<evidence type="ECO:0000255" key="1">
    <source>
        <dbReference type="HAMAP-Rule" id="MF_00741"/>
    </source>
</evidence>
<protein>
    <recommendedName>
        <fullName evidence="1">Phosphoribosylformylglycinamidine cyclo-ligase</fullName>
        <ecNumber evidence="1">6.3.3.1</ecNumber>
    </recommendedName>
    <alternativeName>
        <fullName evidence="1">AIR synthase</fullName>
    </alternativeName>
    <alternativeName>
        <fullName evidence="1">AIRS</fullName>
    </alternativeName>
    <alternativeName>
        <fullName evidence="1">Phosphoribosyl-aminoimidazole synthetase</fullName>
    </alternativeName>
</protein>
<accession>A9KHX3</accession>
<feature type="chain" id="PRO_1000193009" description="Phosphoribosylformylglycinamidine cyclo-ligase">
    <location>
        <begin position="1"/>
        <end position="341"/>
    </location>
</feature>
<comment type="catalytic activity">
    <reaction evidence="1">
        <text>2-formamido-N(1)-(5-O-phospho-beta-D-ribosyl)acetamidine + ATP = 5-amino-1-(5-phospho-beta-D-ribosyl)imidazole + ADP + phosphate + H(+)</text>
        <dbReference type="Rhea" id="RHEA:23032"/>
        <dbReference type="ChEBI" id="CHEBI:15378"/>
        <dbReference type="ChEBI" id="CHEBI:30616"/>
        <dbReference type="ChEBI" id="CHEBI:43474"/>
        <dbReference type="ChEBI" id="CHEBI:137981"/>
        <dbReference type="ChEBI" id="CHEBI:147287"/>
        <dbReference type="ChEBI" id="CHEBI:456216"/>
        <dbReference type="EC" id="6.3.3.1"/>
    </reaction>
</comment>
<comment type="pathway">
    <text evidence="1">Purine metabolism; IMP biosynthesis via de novo pathway; 5-amino-1-(5-phospho-D-ribosyl)imidazole from N(2)-formyl-N(1)-(5-phospho-D-ribosyl)glycinamide: step 2/2.</text>
</comment>
<comment type="subcellular location">
    <subcellularLocation>
        <location evidence="1">Cytoplasm</location>
    </subcellularLocation>
</comment>
<comment type="similarity">
    <text evidence="1">Belongs to the AIR synthase family.</text>
</comment>
<dbReference type="EC" id="6.3.3.1" evidence="1"/>
<dbReference type="EMBL" id="CP000885">
    <property type="protein sequence ID" value="ABX43820.1"/>
    <property type="molecule type" value="Genomic_DNA"/>
</dbReference>
<dbReference type="RefSeq" id="WP_012201468.1">
    <property type="nucleotide sequence ID" value="NC_010001.1"/>
</dbReference>
<dbReference type="SMR" id="A9KHX3"/>
<dbReference type="STRING" id="357809.Cphy_3469"/>
<dbReference type="KEGG" id="cpy:Cphy_3469"/>
<dbReference type="eggNOG" id="COG0150">
    <property type="taxonomic scope" value="Bacteria"/>
</dbReference>
<dbReference type="HOGENOM" id="CLU_047116_0_0_9"/>
<dbReference type="OrthoDB" id="9802507at2"/>
<dbReference type="UniPathway" id="UPA00074">
    <property type="reaction ID" value="UER00129"/>
</dbReference>
<dbReference type="Proteomes" id="UP000000370">
    <property type="component" value="Chromosome"/>
</dbReference>
<dbReference type="GO" id="GO:0005829">
    <property type="term" value="C:cytosol"/>
    <property type="evidence" value="ECO:0007669"/>
    <property type="project" value="TreeGrafter"/>
</dbReference>
<dbReference type="GO" id="GO:0005524">
    <property type="term" value="F:ATP binding"/>
    <property type="evidence" value="ECO:0007669"/>
    <property type="project" value="UniProtKB-KW"/>
</dbReference>
<dbReference type="GO" id="GO:0004637">
    <property type="term" value="F:phosphoribosylamine-glycine ligase activity"/>
    <property type="evidence" value="ECO:0007669"/>
    <property type="project" value="TreeGrafter"/>
</dbReference>
<dbReference type="GO" id="GO:0004641">
    <property type="term" value="F:phosphoribosylformylglycinamidine cyclo-ligase activity"/>
    <property type="evidence" value="ECO:0007669"/>
    <property type="project" value="UniProtKB-UniRule"/>
</dbReference>
<dbReference type="GO" id="GO:0006189">
    <property type="term" value="P:'de novo' IMP biosynthetic process"/>
    <property type="evidence" value="ECO:0007669"/>
    <property type="project" value="UniProtKB-UniRule"/>
</dbReference>
<dbReference type="GO" id="GO:0046084">
    <property type="term" value="P:adenine biosynthetic process"/>
    <property type="evidence" value="ECO:0007669"/>
    <property type="project" value="TreeGrafter"/>
</dbReference>
<dbReference type="CDD" id="cd02196">
    <property type="entry name" value="PurM"/>
    <property type="match status" value="1"/>
</dbReference>
<dbReference type="FunFam" id="3.30.1330.10:FF:000001">
    <property type="entry name" value="Phosphoribosylformylglycinamidine cyclo-ligase"/>
    <property type="match status" value="1"/>
</dbReference>
<dbReference type="FunFam" id="3.90.650.10:FF:000011">
    <property type="entry name" value="Phosphoribosylformylglycinamidine cyclo-ligase"/>
    <property type="match status" value="1"/>
</dbReference>
<dbReference type="Gene3D" id="3.90.650.10">
    <property type="entry name" value="PurM-like C-terminal domain"/>
    <property type="match status" value="1"/>
</dbReference>
<dbReference type="Gene3D" id="3.30.1330.10">
    <property type="entry name" value="PurM-like, N-terminal domain"/>
    <property type="match status" value="1"/>
</dbReference>
<dbReference type="HAMAP" id="MF_00741">
    <property type="entry name" value="AIRS"/>
    <property type="match status" value="1"/>
</dbReference>
<dbReference type="InterPro" id="IPR010918">
    <property type="entry name" value="PurM-like_C_dom"/>
</dbReference>
<dbReference type="InterPro" id="IPR036676">
    <property type="entry name" value="PurM-like_C_sf"/>
</dbReference>
<dbReference type="InterPro" id="IPR016188">
    <property type="entry name" value="PurM-like_N"/>
</dbReference>
<dbReference type="InterPro" id="IPR036921">
    <property type="entry name" value="PurM-like_N_sf"/>
</dbReference>
<dbReference type="InterPro" id="IPR004733">
    <property type="entry name" value="PurM_cligase"/>
</dbReference>
<dbReference type="NCBIfam" id="TIGR00878">
    <property type="entry name" value="purM"/>
    <property type="match status" value="1"/>
</dbReference>
<dbReference type="PANTHER" id="PTHR10520:SF12">
    <property type="entry name" value="TRIFUNCTIONAL PURINE BIOSYNTHETIC PROTEIN ADENOSINE-3"/>
    <property type="match status" value="1"/>
</dbReference>
<dbReference type="PANTHER" id="PTHR10520">
    <property type="entry name" value="TRIFUNCTIONAL PURINE BIOSYNTHETIC PROTEIN ADENOSINE-3-RELATED"/>
    <property type="match status" value="1"/>
</dbReference>
<dbReference type="Pfam" id="PF00586">
    <property type="entry name" value="AIRS"/>
    <property type="match status" value="1"/>
</dbReference>
<dbReference type="Pfam" id="PF02769">
    <property type="entry name" value="AIRS_C"/>
    <property type="match status" value="1"/>
</dbReference>
<dbReference type="SUPFAM" id="SSF56042">
    <property type="entry name" value="PurM C-terminal domain-like"/>
    <property type="match status" value="1"/>
</dbReference>
<dbReference type="SUPFAM" id="SSF55326">
    <property type="entry name" value="PurM N-terminal domain-like"/>
    <property type="match status" value="1"/>
</dbReference>
<keyword id="KW-0067">ATP-binding</keyword>
<keyword id="KW-0963">Cytoplasm</keyword>
<keyword id="KW-0436">Ligase</keyword>
<keyword id="KW-0547">Nucleotide-binding</keyword>
<keyword id="KW-0658">Purine biosynthesis</keyword>
<keyword id="KW-1185">Reference proteome</keyword>
<organism>
    <name type="scientific">Lachnoclostridium phytofermentans (strain ATCC 700394 / DSM 18823 / ISDg)</name>
    <name type="common">Clostridium phytofermentans</name>
    <dbReference type="NCBI Taxonomy" id="357809"/>
    <lineage>
        <taxon>Bacteria</taxon>
        <taxon>Bacillati</taxon>
        <taxon>Bacillota</taxon>
        <taxon>Clostridia</taxon>
        <taxon>Lachnospirales</taxon>
        <taxon>Lachnospiraceae</taxon>
    </lineage>
</organism>
<reference key="1">
    <citation type="submission" date="2007-11" db="EMBL/GenBank/DDBJ databases">
        <title>Complete genome sequence of Clostridium phytofermentans ISDg.</title>
        <authorList>
            <person name="Leschine S.B."/>
            <person name="Warnick T.A."/>
            <person name="Blanchard J.L."/>
            <person name="Schnell D.J."/>
            <person name="Petit E.L."/>
            <person name="LaTouf W.G."/>
            <person name="Copeland A."/>
            <person name="Lucas S."/>
            <person name="Lapidus A."/>
            <person name="Barry K."/>
            <person name="Glavina del Rio T."/>
            <person name="Dalin E."/>
            <person name="Tice H."/>
            <person name="Pitluck S."/>
            <person name="Kiss H."/>
            <person name="Brettin T."/>
            <person name="Bruce D."/>
            <person name="Detter J.C."/>
            <person name="Han C."/>
            <person name="Kuske C."/>
            <person name="Schmutz J."/>
            <person name="Larimer F."/>
            <person name="Land M."/>
            <person name="Hauser L."/>
            <person name="Kyrpides N."/>
            <person name="Kim E.A."/>
            <person name="Richardson P."/>
        </authorList>
    </citation>
    <scope>NUCLEOTIDE SEQUENCE [LARGE SCALE GENOMIC DNA]</scope>
    <source>
        <strain>ATCC 700394 / DSM 18823 / ISDg</strain>
    </source>
</reference>
<gene>
    <name evidence="1" type="primary">purM</name>
    <name type="ordered locus">Cphy_3469</name>
</gene>
<proteinExistence type="inferred from homology"/>
<name>PUR5_LACP7</name>
<sequence>MDYKKAGVDIEAGYKAVELMKKHIQGTMRSEVLTGIGGFSGAFSLTSFKDMEEPTLVSGTDGVGTKLKLAFILDKHDTIGIDCVAMCVNDIACAGGEPLFFLDYIACGKNEPEKIATIVSGVAEGCKQSNAALIGGETAEMPGFYPVEEYDLAGFAVGIVDRKKLITGDKLKHGDVLIGIASSGIHSNGYSLVRKVFRMEKEALNTYYESLSGTLGEVLLTPTKIYVKALNSLKTGNVEVKACSHITGGGFYENIPRMLREGVTAIVKKDSYVIPPIFHMLQKDGSIEEQMMYNTYNMGIGMMIAVDKADADKAVSLLSVAGETAYIVGEIQDGEKGICLC</sequence>